<feature type="chain" id="PRO_0000233469" description="Small ribosomal subunit protein uS17">
    <location>
        <begin position="1"/>
        <end position="86"/>
    </location>
</feature>
<protein>
    <recommendedName>
        <fullName evidence="1">Small ribosomal subunit protein uS17</fullName>
    </recommendedName>
    <alternativeName>
        <fullName evidence="2">30S ribosomal protein S17</fullName>
    </alternativeName>
</protein>
<proteinExistence type="inferred from homology"/>
<accession>Q3Z972</accession>
<name>RS17_DEHM1</name>
<gene>
    <name evidence="1" type="primary">rpsQ</name>
    <name type="ordered locus">DET0483</name>
</gene>
<reference key="1">
    <citation type="journal article" date="2005" name="Science">
        <title>Genome sequence of the PCE-dechlorinating bacterium Dehalococcoides ethenogenes.</title>
        <authorList>
            <person name="Seshadri R."/>
            <person name="Adrian L."/>
            <person name="Fouts D.E."/>
            <person name="Eisen J.A."/>
            <person name="Phillippy A.M."/>
            <person name="Methe B.A."/>
            <person name="Ward N.L."/>
            <person name="Nelson W.C."/>
            <person name="DeBoy R.T."/>
            <person name="Khouri H.M."/>
            <person name="Kolonay J.F."/>
            <person name="Dodson R.J."/>
            <person name="Daugherty S.C."/>
            <person name="Brinkac L.M."/>
            <person name="Sullivan S.A."/>
            <person name="Madupu R."/>
            <person name="Nelson K.E."/>
            <person name="Kang K.H."/>
            <person name="Impraim M."/>
            <person name="Tran K."/>
            <person name="Robinson J.M."/>
            <person name="Forberger H.A."/>
            <person name="Fraser C.M."/>
            <person name="Zinder S.H."/>
            <person name="Heidelberg J.F."/>
        </authorList>
    </citation>
    <scope>NUCLEOTIDE SEQUENCE [LARGE SCALE GENOMIC DNA]</scope>
    <source>
        <strain>ATCC BAA-2266 / KCTC 15142 / 195</strain>
    </source>
</reference>
<evidence type="ECO:0000255" key="1">
    <source>
        <dbReference type="HAMAP-Rule" id="MF_01345"/>
    </source>
</evidence>
<evidence type="ECO:0000305" key="2"/>
<keyword id="KW-0687">Ribonucleoprotein</keyword>
<keyword id="KW-0689">Ribosomal protein</keyword>
<keyword id="KW-0694">RNA-binding</keyword>
<keyword id="KW-0699">rRNA-binding</keyword>
<sequence>MEKNKTRIGHVISDRMEKTIVVGIDVAKRHPLYKKTYRRTMKYLVHDEKNEAKIGDMIEIVKCRPISKGKYWRLNRIITKGHIVAA</sequence>
<comment type="function">
    <text evidence="1">One of the primary rRNA binding proteins, it binds specifically to the 5'-end of 16S ribosomal RNA.</text>
</comment>
<comment type="subunit">
    <text evidence="1">Part of the 30S ribosomal subunit.</text>
</comment>
<comment type="similarity">
    <text evidence="1">Belongs to the universal ribosomal protein uS17 family.</text>
</comment>
<dbReference type="EMBL" id="CP000027">
    <property type="protein sequence ID" value="AAW40174.1"/>
    <property type="molecule type" value="Genomic_DNA"/>
</dbReference>
<dbReference type="RefSeq" id="WP_010936260.1">
    <property type="nucleotide sequence ID" value="NC_002936.3"/>
</dbReference>
<dbReference type="SMR" id="Q3Z972"/>
<dbReference type="FunCoup" id="Q3Z972">
    <property type="interactions" value="334"/>
</dbReference>
<dbReference type="STRING" id="243164.DET0483"/>
<dbReference type="GeneID" id="3230138"/>
<dbReference type="KEGG" id="det:DET0483"/>
<dbReference type="PATRIC" id="fig|243164.10.peg.461"/>
<dbReference type="eggNOG" id="COG0186">
    <property type="taxonomic scope" value="Bacteria"/>
</dbReference>
<dbReference type="HOGENOM" id="CLU_073626_1_0_0"/>
<dbReference type="InParanoid" id="Q3Z972"/>
<dbReference type="Proteomes" id="UP000008289">
    <property type="component" value="Chromosome"/>
</dbReference>
<dbReference type="GO" id="GO:0022627">
    <property type="term" value="C:cytosolic small ribosomal subunit"/>
    <property type="evidence" value="ECO:0007669"/>
    <property type="project" value="TreeGrafter"/>
</dbReference>
<dbReference type="GO" id="GO:0019843">
    <property type="term" value="F:rRNA binding"/>
    <property type="evidence" value="ECO:0007669"/>
    <property type="project" value="UniProtKB-UniRule"/>
</dbReference>
<dbReference type="GO" id="GO:0003735">
    <property type="term" value="F:structural constituent of ribosome"/>
    <property type="evidence" value="ECO:0007669"/>
    <property type="project" value="InterPro"/>
</dbReference>
<dbReference type="GO" id="GO:0006412">
    <property type="term" value="P:translation"/>
    <property type="evidence" value="ECO:0007669"/>
    <property type="project" value="UniProtKB-UniRule"/>
</dbReference>
<dbReference type="CDD" id="cd00364">
    <property type="entry name" value="Ribosomal_uS17"/>
    <property type="match status" value="1"/>
</dbReference>
<dbReference type="Gene3D" id="2.40.50.140">
    <property type="entry name" value="Nucleic acid-binding proteins"/>
    <property type="match status" value="1"/>
</dbReference>
<dbReference type="HAMAP" id="MF_01345_B">
    <property type="entry name" value="Ribosomal_uS17_B"/>
    <property type="match status" value="1"/>
</dbReference>
<dbReference type="InterPro" id="IPR012340">
    <property type="entry name" value="NA-bd_OB-fold"/>
</dbReference>
<dbReference type="InterPro" id="IPR000266">
    <property type="entry name" value="Ribosomal_uS17"/>
</dbReference>
<dbReference type="InterPro" id="IPR019984">
    <property type="entry name" value="Ribosomal_uS17_bact/chlr"/>
</dbReference>
<dbReference type="InterPro" id="IPR019979">
    <property type="entry name" value="Ribosomal_uS17_CS"/>
</dbReference>
<dbReference type="NCBIfam" id="NF004123">
    <property type="entry name" value="PRK05610.1"/>
    <property type="match status" value="1"/>
</dbReference>
<dbReference type="NCBIfam" id="TIGR03635">
    <property type="entry name" value="uS17_bact"/>
    <property type="match status" value="1"/>
</dbReference>
<dbReference type="PANTHER" id="PTHR10744">
    <property type="entry name" value="40S RIBOSOMAL PROTEIN S11 FAMILY MEMBER"/>
    <property type="match status" value="1"/>
</dbReference>
<dbReference type="PANTHER" id="PTHR10744:SF1">
    <property type="entry name" value="SMALL RIBOSOMAL SUBUNIT PROTEIN US17M"/>
    <property type="match status" value="1"/>
</dbReference>
<dbReference type="Pfam" id="PF00366">
    <property type="entry name" value="Ribosomal_S17"/>
    <property type="match status" value="1"/>
</dbReference>
<dbReference type="PRINTS" id="PR00973">
    <property type="entry name" value="RIBOSOMALS17"/>
</dbReference>
<dbReference type="SUPFAM" id="SSF50249">
    <property type="entry name" value="Nucleic acid-binding proteins"/>
    <property type="match status" value="1"/>
</dbReference>
<dbReference type="PROSITE" id="PS00056">
    <property type="entry name" value="RIBOSOMAL_S17"/>
    <property type="match status" value="1"/>
</dbReference>
<organism>
    <name type="scientific">Dehalococcoides mccartyi (strain ATCC BAA-2266 / KCTC 15142 / 195)</name>
    <name type="common">Dehalococcoides ethenogenes (strain 195)</name>
    <dbReference type="NCBI Taxonomy" id="243164"/>
    <lineage>
        <taxon>Bacteria</taxon>
        <taxon>Bacillati</taxon>
        <taxon>Chloroflexota</taxon>
        <taxon>Dehalococcoidia</taxon>
        <taxon>Dehalococcoidales</taxon>
        <taxon>Dehalococcoidaceae</taxon>
        <taxon>Dehalococcoides</taxon>
    </lineage>
</organism>